<organism>
    <name type="scientific">African swine fever virus (isolate Tick/Malawi/Lil 20-1/1983)</name>
    <name type="common">ASFV</name>
    <dbReference type="NCBI Taxonomy" id="10500"/>
    <lineage>
        <taxon>Viruses</taxon>
        <taxon>Varidnaviria</taxon>
        <taxon>Bamfordvirae</taxon>
        <taxon>Nucleocytoviricota</taxon>
        <taxon>Pokkesviricetes</taxon>
        <taxon>Asfuvirales</taxon>
        <taxon>Asfarviridae</taxon>
        <taxon>Asfivirus</taxon>
        <taxon>African swine fever virus</taxon>
    </lineage>
</organism>
<evidence type="ECO:0000250" key="1">
    <source>
        <dbReference type="UniProtKB" id="P04308"/>
    </source>
</evidence>
<evidence type="ECO:0000250" key="2">
    <source>
        <dbReference type="UniProtKB" id="Q89525"/>
    </source>
</evidence>
<evidence type="ECO:0000255" key="3">
    <source>
        <dbReference type="PROSITE-ProRule" id="PRU00541"/>
    </source>
</evidence>
<evidence type="ECO:0000255" key="4">
    <source>
        <dbReference type="PROSITE-ProRule" id="PRU00542"/>
    </source>
</evidence>
<evidence type="ECO:0000305" key="5"/>
<gene>
    <name type="ordered locus">Mal-114</name>
    <name type="ORF">g10L</name>
</gene>
<proteinExistence type="inferred from homology"/>
<name>ETFS_ASFM2</name>
<organismHost>
    <name type="scientific">Ornithodoros</name>
    <name type="common">relapsing fever ticks</name>
    <dbReference type="NCBI Taxonomy" id="6937"/>
</organismHost>
<organismHost>
    <name type="scientific">Phacochoerus aethiopicus</name>
    <name type="common">Warthog</name>
    <dbReference type="NCBI Taxonomy" id="85517"/>
</organismHost>
<organismHost>
    <name type="scientific">Phacochoerus africanus</name>
    <name type="common">Warthog</name>
    <dbReference type="NCBI Taxonomy" id="41426"/>
</organismHost>
<organismHost>
    <name type="scientific">Potamochoerus larvatus</name>
    <name type="common">Bushpig</name>
    <dbReference type="NCBI Taxonomy" id="273792"/>
</organismHost>
<organismHost>
    <name type="scientific">Sus scrofa</name>
    <name type="common">Pig</name>
    <dbReference type="NCBI Taxonomy" id="9823"/>
</organismHost>
<protein>
    <recommendedName>
        <fullName evidence="2">Early transcription factor large subunit homolog</fullName>
        <ecNumber>3.6.4.13</ecNumber>
    </recommendedName>
    <alternativeName>
        <fullName evidence="2">ATP-dependent helicase VETFS homolog</fullName>
    </alternativeName>
</protein>
<reference key="1">
    <citation type="journal article" date="1994" name="J. Gen. Virol.">
        <title>Nucleotide sequence of a 55 kbp region from the right end of the genome of a pathogenic African swine fever virus isolate (Malawi LIL20/1).</title>
        <authorList>
            <person name="Dixon L.K."/>
            <person name="Twigg S.R.F."/>
            <person name="Baylis S.A."/>
            <person name="Vydelingum S."/>
            <person name="Bristow C."/>
            <person name="Hammond J.M."/>
            <person name="Smith G.L."/>
        </authorList>
    </citation>
    <scope>NUCLEOTIDE SEQUENCE [GENOMIC DNA]</scope>
</reference>
<reference key="2">
    <citation type="journal article" date="1993" name="J. Gen. Virol.">
        <title>Three African swine fever virus genes encoding proteins with homology to putative helicases of vaccinia virus.</title>
        <authorList>
            <person name="Baylis S.A."/>
            <person name="Twigg S.R.F."/>
            <person name="Vydelingum S."/>
            <person name="Dixon L.K."/>
            <person name="Smith G.L."/>
        </authorList>
    </citation>
    <scope>NUCLEOTIDE SEQUENCE [GENOMIC DNA]</scope>
</reference>
<reference key="3">
    <citation type="submission" date="2003-03" db="EMBL/GenBank/DDBJ databases">
        <title>African swine fever virus genomes.</title>
        <authorList>
            <person name="Kutish G.F."/>
            <person name="Rock D.L."/>
        </authorList>
    </citation>
    <scope>NUCLEOTIDE SEQUENCE [LARGE SCALE GENOMIC DNA]</scope>
</reference>
<dbReference type="EC" id="3.6.4.13"/>
<dbReference type="EMBL" id="X71982">
    <property type="protein sequence ID" value="CAA50813.1"/>
    <property type="molecule type" value="Genomic_DNA"/>
</dbReference>
<dbReference type="EMBL" id="X72951">
    <property type="protein sequence ID" value="CAA51456.1"/>
    <property type="molecule type" value="Genomic_DNA"/>
</dbReference>
<dbReference type="EMBL" id="AY261361">
    <property type="status" value="NOT_ANNOTATED_CDS"/>
    <property type="molecule type" value="Genomic_DNA"/>
</dbReference>
<dbReference type="PIR" id="JQ2209">
    <property type="entry name" value="JQ2209"/>
</dbReference>
<dbReference type="Proteomes" id="UP000000860">
    <property type="component" value="Segment"/>
</dbReference>
<dbReference type="GO" id="GO:0044423">
    <property type="term" value="C:virion component"/>
    <property type="evidence" value="ECO:0007669"/>
    <property type="project" value="UniProtKB-KW"/>
</dbReference>
<dbReference type="GO" id="GO:0005524">
    <property type="term" value="F:ATP binding"/>
    <property type="evidence" value="ECO:0007669"/>
    <property type="project" value="UniProtKB-KW"/>
</dbReference>
<dbReference type="GO" id="GO:0016887">
    <property type="term" value="F:ATP hydrolysis activity"/>
    <property type="evidence" value="ECO:0007669"/>
    <property type="project" value="RHEA"/>
</dbReference>
<dbReference type="GO" id="GO:0003724">
    <property type="term" value="F:RNA helicase activity"/>
    <property type="evidence" value="ECO:0007669"/>
    <property type="project" value="UniProtKB-EC"/>
</dbReference>
<dbReference type="Gene3D" id="3.40.50.300">
    <property type="entry name" value="P-loop containing nucleotide triphosphate hydrolases"/>
    <property type="match status" value="2"/>
</dbReference>
<dbReference type="InterPro" id="IPR001650">
    <property type="entry name" value="Helicase_C-like"/>
</dbReference>
<dbReference type="InterPro" id="IPR027417">
    <property type="entry name" value="P-loop_NTPase"/>
</dbReference>
<dbReference type="Pfam" id="PF00271">
    <property type="entry name" value="Helicase_C"/>
    <property type="match status" value="1"/>
</dbReference>
<dbReference type="SMART" id="SM00490">
    <property type="entry name" value="HELICc"/>
    <property type="match status" value="1"/>
</dbReference>
<dbReference type="SUPFAM" id="SSF52540">
    <property type="entry name" value="P-loop containing nucleoside triphosphate hydrolases"/>
    <property type="match status" value="1"/>
</dbReference>
<dbReference type="PROSITE" id="PS51192">
    <property type="entry name" value="HELICASE_ATP_BIND_1"/>
    <property type="match status" value="1"/>
</dbReference>
<dbReference type="PROSITE" id="PS51194">
    <property type="entry name" value="HELICASE_CTER"/>
    <property type="match status" value="1"/>
</dbReference>
<sequence length="1098" mass="125189">MICGLILSRLVGPGCEKGGRAFFPCDPYASPFPSIKGLQLHNAQLFVQNFQNPNTPYSRLLLNWQTGTGKSIAAIAIARQFMNHYMNFIENAPWIFVVGFTRTIIQTEMLRRPELGFVSYKEVAELHRLLHIAKQSGSTTSVESRHLNGFISTLKRRLTDRNRGGFFQFYGYKEFASKLFNITSKGEEKNFDVLSLFHRSDEAEDTLNENDISQFVQKISEAETNGLIRVNQKIMEQLRGGLLIADEIHNVYNIQERNNYGIALQYVLDAFPPHQAPRAVFMSATPVTGSVMEYVDLLNLLVPRHELPNGQPLQRQQLFDNSGHSVKWKKDALALVERLSIGRVSFLLDTNTNFYPERIFAGKMLSYRDEKLPYLHFIECPMSNYQLETLKQLGPDPKISSNAYSIYDMVFPNPKFSKQTEPKAYGLFNSTETPAALSMASTDWLLENGVQIIEPSRRTPFNVSGSFLSLQPPTHISGLAFYSGKYTQMMKDILSIIREGRGKILIYHNRVRMSGVLILQEILQSNGILNEVSSPVGTTRCSICAAIRDDHTHSDHQFIPVRFTILHSEIEPAVRERSLALFNASSNLEGHQLRILIGSKVIVEGLNFQAVRYEMIMSLPLDIPRLIQVFGRVVRKNSHMELPPNERNVTIYLYVSTTPDGGPELAKYAQKLKEYILIQEGDKALRKHAIDGFTNQIKIDKPMLESLPLSPSITPANVGATVLNTFEAYGYGEQEVKTISNIIISLFMARPVWTYSELWKAVSTPKLIQGITIDNKLFSEDNFALALISLCYSKNQCKELLIQNRLCTIMHVPAKPEHLYIAAVLNHKKEPVLDIETYIRDFQPPTMHSVRITKYLEHSQTKEPFQVLYEKFQKDFQDEPIEQVLIHYPASFHYTMLEALIIDNLAGMGALVEVYKKFFIAFSKKDIQPFPDIFKIISHVPGDDNTLVGYATEDSVRLITSRKDKTWHEIPLYMLNINVKRKENDIVIGYMESKGKALKFKIRPPIQVLKKNEITDIRMLNRGAVCETRGREEQQKIANQLGISLNLTKISAIKLCLLIRNNLLQKEMEARNQPNGMQDGIRWFYLFNDKMPSLVHTS</sequence>
<comment type="function">
    <text evidence="1">Putative initation factor.</text>
</comment>
<comment type="catalytic activity">
    <reaction evidence="1">
        <text>ATP + H2O = ADP + phosphate + H(+)</text>
        <dbReference type="Rhea" id="RHEA:13065"/>
        <dbReference type="ChEBI" id="CHEBI:15377"/>
        <dbReference type="ChEBI" id="CHEBI:15378"/>
        <dbReference type="ChEBI" id="CHEBI:30616"/>
        <dbReference type="ChEBI" id="CHEBI:43474"/>
        <dbReference type="ChEBI" id="CHEBI:456216"/>
        <dbReference type="EC" id="3.6.4.13"/>
    </reaction>
</comment>
<comment type="subcellular location">
    <subcellularLocation>
        <location evidence="2">Virion</location>
    </subcellularLocation>
    <text evidence="2">Found in association with viral nucleoid.</text>
</comment>
<comment type="induction">
    <text evidence="5">Expressed in the late phase of the viral replicative cycle.</text>
</comment>
<comment type="similarity">
    <text evidence="5">Belongs to the DEAD box helicase family. DEAH subfamily.</text>
</comment>
<keyword id="KW-0067">ATP-binding</keyword>
<keyword id="KW-0347">Helicase</keyword>
<keyword id="KW-0378">Hydrolase</keyword>
<keyword id="KW-0426">Late protein</keyword>
<keyword id="KW-0547">Nucleotide-binding</keyword>
<keyword id="KW-0804">Transcription</keyword>
<keyword id="KW-0805">Transcription regulation</keyword>
<keyword id="KW-0946">Virion</keyword>
<accession>Q89425</accession>
<feature type="chain" id="PRO_0000373108" description="Early transcription factor large subunit homolog">
    <location>
        <begin position="1"/>
        <end position="1098"/>
    </location>
</feature>
<feature type="domain" description="Helicase ATP-binding" evidence="3">
    <location>
        <begin position="17"/>
        <end position="317"/>
    </location>
</feature>
<feature type="domain" description="Helicase C-terminal" evidence="4">
    <location>
        <begin position="489"/>
        <end position="689"/>
    </location>
</feature>
<feature type="short sequence motif" description="DEAH box">
    <location>
        <begin position="246"/>
        <end position="249"/>
    </location>
</feature>
<feature type="binding site" evidence="3">
    <location>
        <begin position="64"/>
        <end position="71"/>
    </location>
    <ligand>
        <name>ATP</name>
        <dbReference type="ChEBI" id="CHEBI:30616"/>
    </ligand>
</feature>